<name>CADA2_STAAU</name>
<organism>
    <name type="scientific">Staphylococcus aureus</name>
    <dbReference type="NCBI Taxonomy" id="1280"/>
    <lineage>
        <taxon>Bacteria</taxon>
        <taxon>Bacillati</taxon>
        <taxon>Bacillota</taxon>
        <taxon>Bacilli</taxon>
        <taxon>Bacillales</taxon>
        <taxon>Staphylococcaceae</taxon>
        <taxon>Staphylococcus</taxon>
    </lineage>
</organism>
<dbReference type="EC" id="7.2.2.21" evidence="1"/>
<dbReference type="EMBL" id="L10909">
    <property type="protein sequence ID" value="AAA26610.1"/>
    <property type="molecule type" value="Genomic_DNA"/>
</dbReference>
<dbReference type="EMBL" id="AB047089">
    <property type="protein sequence ID" value="BAC57487.1"/>
    <property type="molecule type" value="Genomic_DNA"/>
</dbReference>
<dbReference type="EMBL" id="AB037671">
    <property type="protein sequence ID" value="BAB47609.1"/>
    <property type="molecule type" value="Genomic_DNA"/>
</dbReference>
<dbReference type="RefSeq" id="WP_000378485.1">
    <property type="nucleotide sequence ID" value="NZ_WBTV01000056.1"/>
</dbReference>
<dbReference type="RefSeq" id="WP_000378487.1">
    <property type="nucleotide sequence ID" value="NZ_LR027876.1"/>
</dbReference>
<dbReference type="SMR" id="P37386"/>
<dbReference type="GO" id="GO:0005886">
    <property type="term" value="C:plasma membrane"/>
    <property type="evidence" value="ECO:0007669"/>
    <property type="project" value="UniProtKB-SubCell"/>
</dbReference>
<dbReference type="GO" id="GO:0005524">
    <property type="term" value="F:ATP binding"/>
    <property type="evidence" value="ECO:0007669"/>
    <property type="project" value="UniProtKB-KW"/>
</dbReference>
<dbReference type="GO" id="GO:0016887">
    <property type="term" value="F:ATP hydrolysis activity"/>
    <property type="evidence" value="ECO:0007669"/>
    <property type="project" value="InterPro"/>
</dbReference>
<dbReference type="GO" id="GO:0046872">
    <property type="term" value="F:metal ion binding"/>
    <property type="evidence" value="ECO:0007669"/>
    <property type="project" value="UniProtKB-KW"/>
</dbReference>
<dbReference type="GO" id="GO:0008551">
    <property type="term" value="F:P-type cadmium transporter activity"/>
    <property type="evidence" value="ECO:0007669"/>
    <property type="project" value="UniProtKB-EC"/>
</dbReference>
<dbReference type="GO" id="GO:0046686">
    <property type="term" value="P:response to cadmium ion"/>
    <property type="evidence" value="ECO:0007669"/>
    <property type="project" value="UniProtKB-KW"/>
</dbReference>
<dbReference type="CDD" id="cd00371">
    <property type="entry name" value="HMA"/>
    <property type="match status" value="2"/>
</dbReference>
<dbReference type="CDD" id="cd07545">
    <property type="entry name" value="P-type_ATPase_Cd-like"/>
    <property type="match status" value="1"/>
</dbReference>
<dbReference type="FunFam" id="2.70.150.10:FF:000002">
    <property type="entry name" value="Copper-transporting ATPase 1, putative"/>
    <property type="match status" value="1"/>
</dbReference>
<dbReference type="Gene3D" id="3.30.70.100">
    <property type="match status" value="2"/>
</dbReference>
<dbReference type="Gene3D" id="3.40.1110.10">
    <property type="entry name" value="Calcium-transporting ATPase, cytoplasmic domain N"/>
    <property type="match status" value="1"/>
</dbReference>
<dbReference type="Gene3D" id="2.70.150.10">
    <property type="entry name" value="Calcium-transporting ATPase, cytoplasmic transduction domain A"/>
    <property type="match status" value="1"/>
</dbReference>
<dbReference type="Gene3D" id="3.40.50.1000">
    <property type="entry name" value="HAD superfamily/HAD-like"/>
    <property type="match status" value="1"/>
</dbReference>
<dbReference type="InterPro" id="IPR023299">
    <property type="entry name" value="ATPase_P-typ_cyto_dom_N"/>
</dbReference>
<dbReference type="InterPro" id="IPR018303">
    <property type="entry name" value="ATPase_P-typ_P_site"/>
</dbReference>
<dbReference type="InterPro" id="IPR023298">
    <property type="entry name" value="ATPase_P-typ_TM_dom_sf"/>
</dbReference>
<dbReference type="InterPro" id="IPR008250">
    <property type="entry name" value="ATPase_P-typ_transduc_dom_A_sf"/>
</dbReference>
<dbReference type="InterPro" id="IPR051014">
    <property type="entry name" value="Cation_Transport_ATPase_IB"/>
</dbReference>
<dbReference type="InterPro" id="IPR036412">
    <property type="entry name" value="HAD-like_sf"/>
</dbReference>
<dbReference type="InterPro" id="IPR023214">
    <property type="entry name" value="HAD_sf"/>
</dbReference>
<dbReference type="InterPro" id="IPR017969">
    <property type="entry name" value="Heavy-metal-associated_CS"/>
</dbReference>
<dbReference type="InterPro" id="IPR006121">
    <property type="entry name" value="HMA_dom"/>
</dbReference>
<dbReference type="InterPro" id="IPR036163">
    <property type="entry name" value="HMA_dom_sf"/>
</dbReference>
<dbReference type="InterPro" id="IPR027256">
    <property type="entry name" value="P-typ_ATPase_IB"/>
</dbReference>
<dbReference type="InterPro" id="IPR001757">
    <property type="entry name" value="P_typ_ATPase"/>
</dbReference>
<dbReference type="InterPro" id="IPR044492">
    <property type="entry name" value="P_typ_ATPase_HD_dom"/>
</dbReference>
<dbReference type="NCBIfam" id="TIGR01511">
    <property type="entry name" value="ATPase-IB1_Cu"/>
    <property type="match status" value="1"/>
</dbReference>
<dbReference type="NCBIfam" id="TIGR01512">
    <property type="entry name" value="ATPase-IB2_Cd"/>
    <property type="match status" value="1"/>
</dbReference>
<dbReference type="NCBIfam" id="TIGR01525">
    <property type="entry name" value="ATPase-IB_hvy"/>
    <property type="match status" value="1"/>
</dbReference>
<dbReference type="NCBIfam" id="TIGR01494">
    <property type="entry name" value="ATPase_P-type"/>
    <property type="match status" value="1"/>
</dbReference>
<dbReference type="PANTHER" id="PTHR48085">
    <property type="entry name" value="CADMIUM/ZINC-TRANSPORTING ATPASE HMA2-RELATED"/>
    <property type="match status" value="1"/>
</dbReference>
<dbReference type="PANTHER" id="PTHR48085:SF5">
    <property type="entry name" value="CADMIUM_ZINC-TRANSPORTING ATPASE HMA4-RELATED"/>
    <property type="match status" value="1"/>
</dbReference>
<dbReference type="Pfam" id="PF00122">
    <property type="entry name" value="E1-E2_ATPase"/>
    <property type="match status" value="1"/>
</dbReference>
<dbReference type="Pfam" id="PF00403">
    <property type="entry name" value="HMA"/>
    <property type="match status" value="2"/>
</dbReference>
<dbReference type="Pfam" id="PF00702">
    <property type="entry name" value="Hydrolase"/>
    <property type="match status" value="1"/>
</dbReference>
<dbReference type="PRINTS" id="PR00119">
    <property type="entry name" value="CATATPASE"/>
</dbReference>
<dbReference type="PRINTS" id="PR00941">
    <property type="entry name" value="CDATPASE"/>
</dbReference>
<dbReference type="SFLD" id="SFLDG00002">
    <property type="entry name" value="C1.7:_P-type_atpase_like"/>
    <property type="match status" value="1"/>
</dbReference>
<dbReference type="SFLD" id="SFLDF00027">
    <property type="entry name" value="p-type_atpase"/>
    <property type="match status" value="1"/>
</dbReference>
<dbReference type="SUPFAM" id="SSF81653">
    <property type="entry name" value="Calcium ATPase, transduction domain A"/>
    <property type="match status" value="1"/>
</dbReference>
<dbReference type="SUPFAM" id="SSF81665">
    <property type="entry name" value="Calcium ATPase, transmembrane domain M"/>
    <property type="match status" value="1"/>
</dbReference>
<dbReference type="SUPFAM" id="SSF56784">
    <property type="entry name" value="HAD-like"/>
    <property type="match status" value="1"/>
</dbReference>
<dbReference type="SUPFAM" id="SSF55008">
    <property type="entry name" value="HMA, heavy metal-associated domain"/>
    <property type="match status" value="2"/>
</dbReference>
<dbReference type="PROSITE" id="PS00154">
    <property type="entry name" value="ATPASE_E1_E2"/>
    <property type="match status" value="1"/>
</dbReference>
<dbReference type="PROSITE" id="PS01047">
    <property type="entry name" value="HMA_1"/>
    <property type="match status" value="2"/>
</dbReference>
<dbReference type="PROSITE" id="PS50846">
    <property type="entry name" value="HMA_2"/>
    <property type="match status" value="2"/>
</dbReference>
<evidence type="ECO:0000250" key="1">
    <source>
        <dbReference type="UniProtKB" id="P20021"/>
    </source>
</evidence>
<evidence type="ECO:0000255" key="2"/>
<evidence type="ECO:0000255" key="3">
    <source>
        <dbReference type="PROSITE-ProRule" id="PRU00280"/>
    </source>
</evidence>
<evidence type="ECO:0000305" key="4"/>
<gene>
    <name type="primary">cadA</name>
</gene>
<reference key="1">
    <citation type="submission" date="1993-02" db="EMBL/GenBank/DDBJ databases">
        <title>PsiTn554: a Staphylococcus aureus chromosomal element encoding cadmium resistance determinants, and genes resembling the transposases genes of Tn554.</title>
        <authorList>
            <person name="Chikramane S.G."/>
            <person name="Dubin D.T."/>
        </authorList>
    </citation>
    <scope>NUCLEOTIDE SEQUENCE [GENOMIC DNA]</scope>
    <source>
        <transposon>PsiTn554</transposon>
    </source>
</reference>
<reference key="2">
    <citation type="journal article" date="2001" name="Antimicrob. Agents Chemother.">
        <title>Structural comparison of three types of staphylococcal cassette chromosome mec integrated in the chromosome in methicillin-resistant Staphylococcus aureus.</title>
        <authorList>
            <person name="Ito T."/>
            <person name="Katayama Y."/>
            <person name="Asada K."/>
            <person name="Mori N."/>
            <person name="Tsutsumimoto K."/>
        </authorList>
    </citation>
    <scope>NUCLEOTIDE SEQUENCE [GENOMIC DNA]</scope>
    <source>
        <strain>85/2082</strain>
        <strain>85/3907</strain>
    </source>
</reference>
<accession>P37386</accession>
<accession>Q7DIB0</accession>
<accession>Q93ID4</accession>
<sequence>MDSSTKTLTEDKQVYRVEGFSCANCAGKFEKNVKELSGVHDAKVNFGASKIDVFGSATVEDLEKAGAFENLKVAPEKARRRVEPVVTEDKNVYRVEGFSCANCAGKFEKNVKQLAGVQDAKVNFGASKIDVYGNASVEELEKAGAFENLKVIPEKLANPSIQAVKEDTKAPKEEKIPFYKKHSTLLFATLLIAFGYLSHFVNGEDNLVTSMLFVSSIVIGGYSLFKVGFQNLIRFDFDMKTLMTVAVIGAAIIGEWAEASIVVILFAISEALERFSMDRARQSIRSLMDIAPKEALVRRNGQEIMIHVDDIAVGDIMIVKPGEKIAMDGIIINGVSAVNQAAITGESVPVAKTVDDEVFAGTLNEEGLLEVKITKYVEDTTISKIIHLVEEAQGERAPAQAFVDKFAKYYTPIIMVIAALVAVVPPLFFGGSWDTWVYQGLAVLVVGCPCALVITTPISIVSAIGNAAKKGVLIKGGVYLEELGAIKAIAFDKTGTLTKGVPVVTDFKVLNDQVEEKELFSIITALEYRSQHPLASAIMKKAEQDNITYSDVRVKDFTSITGRGIQGNIDGTTYYIGSPRLFKELNVSDFSLEFENKVKVLQNQGKTAMIIGTDQTILGVIAVADEVRETSKNVILKLHQLGIKQTIMLTGDNQGTAEAIGAHVGVSDIQSELLPQDKLDYIKKMKAEHGNVAMIGDGVNDAPALAASTVGIAMGGAGTDTAIETADIALMGDDLSKLPFAVRLSRKTLNIIKANITFAIGIKIIALLLVIPGWLTLWIAILSDMGATILVALNSLRLMRVKDK</sequence>
<comment type="function">
    <text evidence="1">Couples the hydrolysis of ATP with the export of cadmium. Involved in cadmium resistance.</text>
</comment>
<comment type="catalytic activity">
    <reaction evidence="1">
        <text>Cd(2+)(in) + ATP + H2O = Cd(2+)(out) + ADP + phosphate + H(+)</text>
        <dbReference type="Rhea" id="RHEA:12132"/>
        <dbReference type="ChEBI" id="CHEBI:15377"/>
        <dbReference type="ChEBI" id="CHEBI:15378"/>
        <dbReference type="ChEBI" id="CHEBI:30616"/>
        <dbReference type="ChEBI" id="CHEBI:43474"/>
        <dbReference type="ChEBI" id="CHEBI:48775"/>
        <dbReference type="ChEBI" id="CHEBI:456216"/>
        <dbReference type="EC" id="7.2.2.21"/>
    </reaction>
</comment>
<comment type="subcellular location">
    <subcellularLocation>
        <location evidence="1">Cell membrane</location>
        <topology evidence="2">Multi-pass membrane protein</topology>
    </subcellularLocation>
</comment>
<comment type="similarity">
    <text evidence="4">Belongs to the cation transport ATPase (P-type) (TC 3.A.3) family. Type IB subfamily.</text>
</comment>
<keyword id="KW-0067">ATP-binding</keyword>
<keyword id="KW-0104">Cadmium</keyword>
<keyword id="KW-0105">Cadmium resistance</keyword>
<keyword id="KW-1003">Cell membrane</keyword>
<keyword id="KW-0406">Ion transport</keyword>
<keyword id="KW-0460">Magnesium</keyword>
<keyword id="KW-0472">Membrane</keyword>
<keyword id="KW-0479">Metal-binding</keyword>
<keyword id="KW-0547">Nucleotide-binding</keyword>
<keyword id="KW-0597">Phosphoprotein</keyword>
<keyword id="KW-0677">Repeat</keyword>
<keyword id="KW-1278">Translocase</keyword>
<keyword id="KW-0812">Transmembrane</keyword>
<keyword id="KW-1133">Transmembrane helix</keyword>
<keyword id="KW-0813">Transport</keyword>
<keyword id="KW-0814">Transposable element</keyword>
<feature type="chain" id="PRO_0000046249" description="Probable cadmium-transporting ATPase">
    <location>
        <begin position="1"/>
        <end position="804"/>
    </location>
</feature>
<feature type="transmembrane region" description="Helical" evidence="2">
    <location>
        <begin position="183"/>
        <end position="203"/>
    </location>
</feature>
<feature type="transmembrane region" description="Helical" evidence="2">
    <location>
        <begin position="207"/>
        <end position="227"/>
    </location>
</feature>
<feature type="transmembrane region" description="Helical" evidence="2">
    <location>
        <begin position="248"/>
        <end position="268"/>
    </location>
</feature>
<feature type="transmembrane region" description="Helical" evidence="2">
    <location>
        <begin position="413"/>
        <end position="433"/>
    </location>
</feature>
<feature type="transmembrane region" description="Helical" evidence="2">
    <location>
        <begin position="441"/>
        <end position="461"/>
    </location>
</feature>
<feature type="transmembrane region" description="Helical" evidence="2">
    <location>
        <begin position="749"/>
        <end position="771"/>
    </location>
</feature>
<feature type="transmembrane region" description="Helical" evidence="2">
    <location>
        <begin position="776"/>
        <end position="798"/>
    </location>
</feature>
<feature type="domain" description="HMA 1" evidence="3">
    <location>
        <begin position="11"/>
        <end position="74"/>
    </location>
</feature>
<feature type="domain" description="HMA 2" evidence="3">
    <location>
        <begin position="89"/>
        <end position="152"/>
    </location>
</feature>
<feature type="active site" description="4-aspartylphosphate intermediate" evidence="4">
    <location>
        <position position="492"/>
    </location>
</feature>
<feature type="binding site" evidence="3">
    <location>
        <position position="22"/>
    </location>
    <ligand>
        <name>Cd(2+)</name>
        <dbReference type="ChEBI" id="CHEBI:48775"/>
        <label>1</label>
    </ligand>
</feature>
<feature type="binding site" evidence="3">
    <location>
        <position position="25"/>
    </location>
    <ligand>
        <name>Cd(2+)</name>
        <dbReference type="ChEBI" id="CHEBI:48775"/>
        <label>1</label>
    </ligand>
</feature>
<feature type="binding site" evidence="3">
    <location>
        <position position="100"/>
    </location>
    <ligand>
        <name>Cd(2+)</name>
        <dbReference type="ChEBI" id="CHEBI:48775"/>
        <label>2</label>
    </ligand>
</feature>
<feature type="binding site" evidence="3">
    <location>
        <position position="103"/>
    </location>
    <ligand>
        <name>Cd(2+)</name>
        <dbReference type="ChEBI" id="CHEBI:48775"/>
        <label>2</label>
    </ligand>
</feature>
<feature type="sequence variant" description="In strain: 85/2082.">
    <original>A</original>
    <variation>T</variation>
    <location>
        <position position="135"/>
    </location>
</feature>
<proteinExistence type="inferred from homology"/>
<protein>
    <recommendedName>
        <fullName evidence="4">Probable cadmium-transporting ATPase</fullName>
        <ecNumber evidence="1">7.2.2.21</ecNumber>
    </recommendedName>
    <alternativeName>
        <fullName evidence="1">Cadmium-efflux ATPase</fullName>
    </alternativeName>
</protein>